<keyword id="KW-0025">Alternative splicing</keyword>
<keyword id="KW-1003">Cell membrane</keyword>
<keyword id="KW-0472">Membrane</keyword>
<keyword id="KW-1185">Reference proteome</keyword>
<keyword id="KW-0812">Transmembrane</keyword>
<keyword id="KW-1133">Transmembrane helix</keyword>
<organism>
    <name type="scientific">Arabidopsis thaliana</name>
    <name type="common">Mouse-ear cress</name>
    <dbReference type="NCBI Taxonomy" id="3702"/>
    <lineage>
        <taxon>Eukaryota</taxon>
        <taxon>Viridiplantae</taxon>
        <taxon>Streptophyta</taxon>
        <taxon>Embryophyta</taxon>
        <taxon>Tracheophyta</taxon>
        <taxon>Spermatophyta</taxon>
        <taxon>Magnoliopsida</taxon>
        <taxon>eudicotyledons</taxon>
        <taxon>Gunneridae</taxon>
        <taxon>Pentapetalae</taxon>
        <taxon>rosids</taxon>
        <taxon>malvids</taxon>
        <taxon>Brassicales</taxon>
        <taxon>Brassicaceae</taxon>
        <taxon>Camelineae</taxon>
        <taxon>Arabidopsis</taxon>
    </lineage>
</organism>
<reference key="1">
    <citation type="journal article" date="1999" name="Nature">
        <title>Sequence and analysis of chromosome 2 of the plant Arabidopsis thaliana.</title>
        <authorList>
            <person name="Lin X."/>
            <person name="Kaul S."/>
            <person name="Rounsley S.D."/>
            <person name="Shea T.P."/>
            <person name="Benito M.-I."/>
            <person name="Town C.D."/>
            <person name="Fujii C.Y."/>
            <person name="Mason T.M."/>
            <person name="Bowman C.L."/>
            <person name="Barnstead M.E."/>
            <person name="Feldblyum T.V."/>
            <person name="Buell C.R."/>
            <person name="Ketchum K.A."/>
            <person name="Lee J.J."/>
            <person name="Ronning C.M."/>
            <person name="Koo H.L."/>
            <person name="Moffat K.S."/>
            <person name="Cronin L.A."/>
            <person name="Shen M."/>
            <person name="Pai G."/>
            <person name="Van Aken S."/>
            <person name="Umayam L."/>
            <person name="Tallon L.J."/>
            <person name="Gill J.E."/>
            <person name="Adams M.D."/>
            <person name="Carrera A.J."/>
            <person name="Creasy T.H."/>
            <person name="Goodman H.M."/>
            <person name="Somerville C.R."/>
            <person name="Copenhaver G.P."/>
            <person name="Preuss D."/>
            <person name="Nierman W.C."/>
            <person name="White O."/>
            <person name="Eisen J.A."/>
            <person name="Salzberg S.L."/>
            <person name="Fraser C.M."/>
            <person name="Venter J.C."/>
        </authorList>
    </citation>
    <scope>NUCLEOTIDE SEQUENCE [LARGE SCALE GENOMIC DNA]</scope>
    <source>
        <strain>cv. Columbia</strain>
    </source>
</reference>
<reference key="2">
    <citation type="journal article" date="2017" name="Plant J.">
        <title>Araport11: a complete reannotation of the Arabidopsis thaliana reference genome.</title>
        <authorList>
            <person name="Cheng C.Y."/>
            <person name="Krishnakumar V."/>
            <person name="Chan A.P."/>
            <person name="Thibaud-Nissen F."/>
            <person name="Schobel S."/>
            <person name="Town C.D."/>
        </authorList>
    </citation>
    <scope>GENOME REANNOTATION</scope>
    <source>
        <strain>cv. Columbia</strain>
    </source>
</reference>
<reference key="3">
    <citation type="journal article" date="2002" name="Science">
        <title>Functional annotation of a full-length Arabidopsis cDNA collection.</title>
        <authorList>
            <person name="Seki M."/>
            <person name="Narusaka M."/>
            <person name="Kamiya A."/>
            <person name="Ishida J."/>
            <person name="Satou M."/>
            <person name="Sakurai T."/>
            <person name="Nakajima M."/>
            <person name="Enju A."/>
            <person name="Akiyama K."/>
            <person name="Oono Y."/>
            <person name="Muramatsu M."/>
            <person name="Hayashizaki Y."/>
            <person name="Kawai J."/>
            <person name="Carninci P."/>
            <person name="Itoh M."/>
            <person name="Ishii Y."/>
            <person name="Arakawa T."/>
            <person name="Shibata K."/>
            <person name="Shinagawa A."/>
            <person name="Shinozaki K."/>
        </authorList>
    </citation>
    <scope>NUCLEOTIDE SEQUENCE [LARGE SCALE MRNA] (ISOFORM 1)</scope>
    <source>
        <strain>cv. Columbia</strain>
    </source>
</reference>
<gene>
    <name type="ordered locus">At2g23680</name>
    <name type="ORF">F26B6.33</name>
</gene>
<sequence>MENIEYLNEIQAVAGKLIHSYGVPVMITLFLRWLASIVAVFLMILDQTKWKYSNNIMASLLAPYLFSSLPIVIFQVLRNGVGKWIALLTVILRLFLPNHFHESLEIPGATILLIVVTPSDIGAIFRDDLRYTGGDVCLLTSFYLINKHTKACGGIKNSFTQKDKVTYSICLWILFVYPILSSFAALFYL</sequence>
<proteinExistence type="evidence at transcript level"/>
<accession>O64834</accession>
<accession>B3H4D1</accession>
<comment type="subcellular location">
    <subcellularLocation>
        <location evidence="1">Cell membrane</location>
        <topology evidence="1">Multi-pass membrane protein</topology>
    </subcellularLocation>
</comment>
<comment type="alternative products">
    <event type="alternative splicing"/>
    <isoform>
        <id>O64834-1</id>
        <name>1</name>
        <sequence type="displayed"/>
    </isoform>
    <isoform>
        <id>O64834-2</id>
        <name>2</name>
        <sequence type="described" ref="VSP_044489"/>
    </isoform>
</comment>
<comment type="similarity">
    <text evidence="3">Belongs to the Cold-regulated 413 protein family.</text>
</comment>
<comment type="sequence caution" evidence="3">
    <conflict type="frameshift">
        <sequence resource="EMBL" id="AV824982"/>
    </conflict>
</comment>
<dbReference type="EMBL" id="AC003040">
    <property type="protein sequence ID" value="AAM14866.1"/>
    <property type="molecule type" value="Genomic_DNA"/>
</dbReference>
<dbReference type="EMBL" id="AC004482">
    <property type="protein sequence ID" value="AAC17100.1"/>
    <property type="molecule type" value="Genomic_DNA"/>
</dbReference>
<dbReference type="EMBL" id="CP002685">
    <property type="protein sequence ID" value="AEC07479.1"/>
    <property type="molecule type" value="Genomic_DNA"/>
</dbReference>
<dbReference type="EMBL" id="CP002685">
    <property type="protein sequence ID" value="AEC07480.1"/>
    <property type="molecule type" value="Genomic_DNA"/>
</dbReference>
<dbReference type="EMBL" id="AV824982">
    <property type="status" value="NOT_ANNOTATED_CDS"/>
    <property type="molecule type" value="mRNA"/>
</dbReference>
<dbReference type="PIR" id="T02423">
    <property type="entry name" value="T02423"/>
</dbReference>
<dbReference type="RefSeq" id="NP_001118373.1">
    <molecule id="O64834-2"/>
    <property type="nucleotide sequence ID" value="NM_001124901.2"/>
</dbReference>
<dbReference type="RefSeq" id="NP_179948.1">
    <molecule id="O64834-1"/>
    <property type="nucleotide sequence ID" value="NM_127931.3"/>
</dbReference>
<dbReference type="SMR" id="O64834"/>
<dbReference type="BioGRID" id="2251">
    <property type="interactions" value="1"/>
</dbReference>
<dbReference type="FunCoup" id="O64834">
    <property type="interactions" value="26"/>
</dbReference>
<dbReference type="IntAct" id="O64834">
    <property type="interactions" value="1"/>
</dbReference>
<dbReference type="STRING" id="3702.O64834"/>
<dbReference type="PaxDb" id="3702-AT2G23680.1"/>
<dbReference type="EnsemblPlants" id="AT2G23680.1">
    <molecule id="O64834-1"/>
    <property type="protein sequence ID" value="AT2G23680.1"/>
    <property type="gene ID" value="AT2G23680"/>
</dbReference>
<dbReference type="EnsemblPlants" id="AT2G23680.2">
    <molecule id="O64834-2"/>
    <property type="protein sequence ID" value="AT2G23680.2"/>
    <property type="gene ID" value="AT2G23680"/>
</dbReference>
<dbReference type="GeneID" id="816899"/>
<dbReference type="Gramene" id="AT2G23680.1">
    <molecule id="O64834-1"/>
    <property type="protein sequence ID" value="AT2G23680.1"/>
    <property type="gene ID" value="AT2G23680"/>
</dbReference>
<dbReference type="Gramene" id="AT2G23680.2">
    <molecule id="O64834-2"/>
    <property type="protein sequence ID" value="AT2G23680.2"/>
    <property type="gene ID" value="AT2G23680"/>
</dbReference>
<dbReference type="KEGG" id="ath:AT2G23680"/>
<dbReference type="Araport" id="AT2G23680"/>
<dbReference type="TAIR" id="AT2G23680"/>
<dbReference type="eggNOG" id="ENOG502QQY4">
    <property type="taxonomic scope" value="Eukaryota"/>
</dbReference>
<dbReference type="InParanoid" id="O64834"/>
<dbReference type="OMA" id="GTKWKST"/>
<dbReference type="PhylomeDB" id="O64834"/>
<dbReference type="PRO" id="PR:O64834"/>
<dbReference type="Proteomes" id="UP000006548">
    <property type="component" value="Chromosome 2"/>
</dbReference>
<dbReference type="ExpressionAtlas" id="O64834">
    <property type="expression patterns" value="baseline and differential"/>
</dbReference>
<dbReference type="GO" id="GO:0005886">
    <property type="term" value="C:plasma membrane"/>
    <property type="evidence" value="ECO:0007669"/>
    <property type="project" value="UniProtKB-SubCell"/>
</dbReference>
<dbReference type="InterPro" id="IPR008892">
    <property type="entry name" value="COR413"/>
</dbReference>
<dbReference type="PANTHER" id="PTHR33596:SF1">
    <property type="entry name" value="COLD-REGULATED 413 PLASMA MEMBRANE PROTEIN 1-RELATED"/>
    <property type="match status" value="1"/>
</dbReference>
<dbReference type="PANTHER" id="PTHR33596">
    <property type="entry name" value="COLD-REGULATED 413 PLASMA MEMBRANE PROTEIN 2"/>
    <property type="match status" value="1"/>
</dbReference>
<dbReference type="Pfam" id="PF05562">
    <property type="entry name" value="WCOR413"/>
    <property type="match status" value="1"/>
</dbReference>
<protein>
    <recommendedName>
        <fullName>Cold-regulated 413 plasma membrane protein 3</fullName>
        <shortName>AtCOR413-PM3</shortName>
    </recommendedName>
</protein>
<name>CRPM3_ARATH</name>
<feature type="chain" id="PRO_0000420442" description="Cold-regulated 413 plasma membrane protein 3">
    <location>
        <begin position="1"/>
        <end position="189"/>
    </location>
</feature>
<feature type="topological domain" description="Extracellular" evidence="2">
    <location>
        <begin position="1"/>
        <end position="24"/>
    </location>
</feature>
<feature type="transmembrane region" description="Helical" evidence="2">
    <location>
        <begin position="25"/>
        <end position="45"/>
    </location>
</feature>
<feature type="topological domain" description="Cytoplasmic" evidence="2">
    <location>
        <begin position="46"/>
        <end position="55"/>
    </location>
</feature>
<feature type="transmembrane region" description="Helical" evidence="2">
    <location>
        <begin position="56"/>
        <end position="76"/>
    </location>
</feature>
<feature type="topological domain" description="Extracellular" evidence="2">
    <location>
        <begin position="77"/>
        <end position="79"/>
    </location>
</feature>
<feature type="transmembrane region" description="Helical" evidence="2">
    <location>
        <begin position="80"/>
        <end position="100"/>
    </location>
</feature>
<feature type="topological domain" description="Cytoplasmic" evidence="2">
    <location>
        <begin position="101"/>
        <end position="104"/>
    </location>
</feature>
<feature type="transmembrane region" description="Helical" evidence="2">
    <location>
        <begin position="105"/>
        <end position="125"/>
    </location>
</feature>
<feature type="topological domain" description="Extracellular" evidence="2">
    <location>
        <begin position="126"/>
        <end position="168"/>
    </location>
</feature>
<feature type="transmembrane region" description="Helical" evidence="2">
    <location>
        <begin position="169"/>
        <end position="189"/>
    </location>
</feature>
<feature type="splice variant" id="VSP_044489" description="In isoform 2." evidence="3">
    <location>
        <begin position="1"/>
        <end position="42"/>
    </location>
</feature>
<evidence type="ECO:0000250" key="1"/>
<evidence type="ECO:0000255" key="2"/>
<evidence type="ECO:0000305" key="3"/>